<comment type="function">
    <text evidence="1">Cleaves peptides in various proteins in a process that requires ATP hydrolysis. Has a chymotrypsin-like activity. Plays a major role in the degradation of misfolded proteins.</text>
</comment>
<comment type="catalytic activity">
    <reaction evidence="1">
        <text>Hydrolysis of proteins to small peptides in the presence of ATP and magnesium. alpha-casein is the usual test substrate. In the absence of ATP, only oligopeptides shorter than five residues are hydrolyzed (such as succinyl-Leu-Tyr-|-NHMec, and Leu-Tyr-Leu-|-Tyr-Trp, in which cleavage of the -Tyr-|-Leu- and -Tyr-|-Trp bonds also occurs).</text>
        <dbReference type="EC" id="3.4.21.92"/>
    </reaction>
</comment>
<comment type="subunit">
    <text evidence="1">Fourteen ClpP subunits assemble into 2 heptameric rings which stack back to back to give a disk-like structure with a central cavity, resembling the structure of eukaryotic proteasomes.</text>
</comment>
<comment type="subcellular location">
    <subcellularLocation>
        <location evidence="1">Cytoplasm</location>
    </subcellularLocation>
</comment>
<comment type="similarity">
    <text evidence="1">Belongs to the peptidase S14 family.</text>
</comment>
<feature type="chain" id="PRO_0000252812" description="ATP-dependent Clp protease proteolytic subunit">
    <location>
        <begin position="1"/>
        <end position="206"/>
    </location>
</feature>
<feature type="active site" description="Nucleophile" evidence="1">
    <location>
        <position position="108"/>
    </location>
</feature>
<feature type="active site" evidence="1">
    <location>
        <position position="133"/>
    </location>
</feature>
<proteinExistence type="inferred from homology"/>
<accession>Q1QVW1</accession>
<gene>
    <name evidence="1" type="primary">clpP</name>
    <name type="ordered locus">Csal_2046</name>
</gene>
<evidence type="ECO:0000255" key="1">
    <source>
        <dbReference type="HAMAP-Rule" id="MF_00444"/>
    </source>
</evidence>
<dbReference type="EC" id="3.4.21.92" evidence="1"/>
<dbReference type="EMBL" id="CP000285">
    <property type="protein sequence ID" value="ABE59397.1"/>
    <property type="molecule type" value="Genomic_DNA"/>
</dbReference>
<dbReference type="RefSeq" id="WP_011507343.1">
    <property type="nucleotide sequence ID" value="NC_007963.1"/>
</dbReference>
<dbReference type="SMR" id="Q1QVW1"/>
<dbReference type="STRING" id="290398.Csal_2046"/>
<dbReference type="MEROPS" id="S14.001"/>
<dbReference type="GeneID" id="95334757"/>
<dbReference type="KEGG" id="csa:Csal_2046"/>
<dbReference type="eggNOG" id="COG0740">
    <property type="taxonomic scope" value="Bacteria"/>
</dbReference>
<dbReference type="HOGENOM" id="CLU_058707_3_2_6"/>
<dbReference type="OrthoDB" id="9802800at2"/>
<dbReference type="Proteomes" id="UP000000239">
    <property type="component" value="Chromosome"/>
</dbReference>
<dbReference type="GO" id="GO:0005737">
    <property type="term" value="C:cytoplasm"/>
    <property type="evidence" value="ECO:0007669"/>
    <property type="project" value="UniProtKB-SubCell"/>
</dbReference>
<dbReference type="GO" id="GO:0009368">
    <property type="term" value="C:endopeptidase Clp complex"/>
    <property type="evidence" value="ECO:0007669"/>
    <property type="project" value="TreeGrafter"/>
</dbReference>
<dbReference type="GO" id="GO:0004176">
    <property type="term" value="F:ATP-dependent peptidase activity"/>
    <property type="evidence" value="ECO:0007669"/>
    <property type="project" value="InterPro"/>
</dbReference>
<dbReference type="GO" id="GO:0051117">
    <property type="term" value="F:ATPase binding"/>
    <property type="evidence" value="ECO:0007669"/>
    <property type="project" value="TreeGrafter"/>
</dbReference>
<dbReference type="GO" id="GO:0004252">
    <property type="term" value="F:serine-type endopeptidase activity"/>
    <property type="evidence" value="ECO:0007669"/>
    <property type="project" value="UniProtKB-UniRule"/>
</dbReference>
<dbReference type="GO" id="GO:0006515">
    <property type="term" value="P:protein quality control for misfolded or incompletely synthesized proteins"/>
    <property type="evidence" value="ECO:0007669"/>
    <property type="project" value="TreeGrafter"/>
</dbReference>
<dbReference type="CDD" id="cd07017">
    <property type="entry name" value="S14_ClpP_2"/>
    <property type="match status" value="1"/>
</dbReference>
<dbReference type="FunFam" id="3.90.226.10:FF:000001">
    <property type="entry name" value="ATP-dependent Clp protease proteolytic subunit"/>
    <property type="match status" value="1"/>
</dbReference>
<dbReference type="Gene3D" id="3.90.226.10">
    <property type="entry name" value="2-enoyl-CoA Hydratase, Chain A, domain 1"/>
    <property type="match status" value="1"/>
</dbReference>
<dbReference type="HAMAP" id="MF_00444">
    <property type="entry name" value="ClpP"/>
    <property type="match status" value="1"/>
</dbReference>
<dbReference type="InterPro" id="IPR001907">
    <property type="entry name" value="ClpP"/>
</dbReference>
<dbReference type="InterPro" id="IPR029045">
    <property type="entry name" value="ClpP/crotonase-like_dom_sf"/>
</dbReference>
<dbReference type="InterPro" id="IPR023562">
    <property type="entry name" value="ClpP/TepA"/>
</dbReference>
<dbReference type="InterPro" id="IPR033135">
    <property type="entry name" value="ClpP_His_AS"/>
</dbReference>
<dbReference type="InterPro" id="IPR018215">
    <property type="entry name" value="ClpP_Ser_AS"/>
</dbReference>
<dbReference type="NCBIfam" id="TIGR00493">
    <property type="entry name" value="clpP"/>
    <property type="match status" value="1"/>
</dbReference>
<dbReference type="NCBIfam" id="NF001368">
    <property type="entry name" value="PRK00277.1"/>
    <property type="match status" value="1"/>
</dbReference>
<dbReference type="NCBIfam" id="NF009205">
    <property type="entry name" value="PRK12553.1"/>
    <property type="match status" value="1"/>
</dbReference>
<dbReference type="PANTHER" id="PTHR10381">
    <property type="entry name" value="ATP-DEPENDENT CLP PROTEASE PROTEOLYTIC SUBUNIT"/>
    <property type="match status" value="1"/>
</dbReference>
<dbReference type="PANTHER" id="PTHR10381:SF70">
    <property type="entry name" value="ATP-DEPENDENT CLP PROTEASE PROTEOLYTIC SUBUNIT"/>
    <property type="match status" value="1"/>
</dbReference>
<dbReference type="Pfam" id="PF00574">
    <property type="entry name" value="CLP_protease"/>
    <property type="match status" value="1"/>
</dbReference>
<dbReference type="PRINTS" id="PR00127">
    <property type="entry name" value="CLPPROTEASEP"/>
</dbReference>
<dbReference type="SUPFAM" id="SSF52096">
    <property type="entry name" value="ClpP/crotonase"/>
    <property type="match status" value="1"/>
</dbReference>
<dbReference type="PROSITE" id="PS00382">
    <property type="entry name" value="CLP_PROTEASE_HIS"/>
    <property type="match status" value="1"/>
</dbReference>
<dbReference type="PROSITE" id="PS00381">
    <property type="entry name" value="CLP_PROTEASE_SER"/>
    <property type="match status" value="1"/>
</dbReference>
<reference key="1">
    <citation type="journal article" date="2011" name="Stand. Genomic Sci.">
        <title>Complete genome sequence of the halophilic and highly halotolerant Chromohalobacter salexigens type strain (1H11(T)).</title>
        <authorList>
            <person name="Copeland A."/>
            <person name="O'Connor K."/>
            <person name="Lucas S."/>
            <person name="Lapidus A."/>
            <person name="Berry K.W."/>
            <person name="Detter J.C."/>
            <person name="Del Rio T.G."/>
            <person name="Hammon N."/>
            <person name="Dalin E."/>
            <person name="Tice H."/>
            <person name="Pitluck S."/>
            <person name="Bruce D."/>
            <person name="Goodwin L."/>
            <person name="Han C."/>
            <person name="Tapia R."/>
            <person name="Saunders E."/>
            <person name="Schmutz J."/>
            <person name="Brettin T."/>
            <person name="Larimer F."/>
            <person name="Land M."/>
            <person name="Hauser L."/>
            <person name="Vargas C."/>
            <person name="Nieto J.J."/>
            <person name="Kyrpides N.C."/>
            <person name="Ivanova N."/>
            <person name="Goker M."/>
            <person name="Klenk H.P."/>
            <person name="Csonka L.N."/>
            <person name="Woyke T."/>
        </authorList>
    </citation>
    <scope>NUCLEOTIDE SEQUENCE [LARGE SCALE GENOMIC DNA]</scope>
    <source>
        <strain>ATCC BAA-138 / DSM 3043 / CIP 106854 / NCIMB 13768 / 1H11</strain>
    </source>
</reference>
<organism>
    <name type="scientific">Chromohalobacter salexigens (strain ATCC BAA-138 / DSM 3043 / CIP 106854 / NCIMB 13768 / 1H11)</name>
    <dbReference type="NCBI Taxonomy" id="290398"/>
    <lineage>
        <taxon>Bacteria</taxon>
        <taxon>Pseudomonadati</taxon>
        <taxon>Pseudomonadota</taxon>
        <taxon>Gammaproteobacteria</taxon>
        <taxon>Oceanospirillales</taxon>
        <taxon>Halomonadaceae</taxon>
        <taxon>Chromohalobacter</taxon>
    </lineage>
</organism>
<protein>
    <recommendedName>
        <fullName evidence="1">ATP-dependent Clp protease proteolytic subunit</fullName>
        <ecNumber evidence="1">3.4.21.92</ecNumber>
    </recommendedName>
    <alternativeName>
        <fullName evidence="1">Endopeptidase Clp</fullName>
    </alternativeName>
</protein>
<sequence length="206" mass="22578">MGNEFDISNAGGLVPMVVEQNARGERAYDIYSRLLKERVIFLIGPVEDYMANLVVAQMLFLESENPDKDIHLYINSPGGSVTAGMSIYDTMQFIKPDVSTVCVGQAASMGALLLAGGAAGKRYCLPHSRMMIHQPLGGYQGQAADIEIHTKEILNIRQQLNEILAKHTGQDAETVARDTDRDNFMNGTQAVEYGLIDAMLDKRPVS</sequence>
<name>CLPP_CHRSD</name>
<keyword id="KW-0963">Cytoplasm</keyword>
<keyword id="KW-0378">Hydrolase</keyword>
<keyword id="KW-0645">Protease</keyword>
<keyword id="KW-1185">Reference proteome</keyword>
<keyword id="KW-0720">Serine protease</keyword>